<accession>Q46E28</accession>
<sequence>MEDRFEIGRIVRAKTISDAWYRGLNIIRNHGQVITDERGSQIREFMDLMIIIEDPYTDRIPHETAWNEERLEEYAKQLISGENTQDFEYTYGQRLRNWHGKVDQIDYVIEKLQQNPTSRRAIAVTWIPPVDTKVNEVPCMMLDDFKIRDGKIHLTTLFRSHDFGGAYPANLYGLSKLLEYVADKVGTKPGTITTISISAHIYDHDWDMVENIVKGVN</sequence>
<proteinExistence type="inferred from homology"/>
<protein>
    <recommendedName>
        <fullName evidence="1">Putative thymidylate synthase</fullName>
        <shortName evidence="1">TS</shortName>
        <shortName evidence="1">TSase</shortName>
        <ecNumber evidence="1">2.1.1.-</ecNumber>
    </recommendedName>
</protein>
<reference key="1">
    <citation type="journal article" date="2006" name="J. Bacteriol.">
        <title>The Methanosarcina barkeri genome: comparative analysis with Methanosarcina acetivorans and Methanosarcina mazei reveals extensive rearrangement within methanosarcinal genomes.</title>
        <authorList>
            <person name="Maeder D.L."/>
            <person name="Anderson I."/>
            <person name="Brettin T.S."/>
            <person name="Bruce D.C."/>
            <person name="Gilna P."/>
            <person name="Han C.S."/>
            <person name="Lapidus A."/>
            <person name="Metcalf W.W."/>
            <person name="Saunders E."/>
            <person name="Tapia R."/>
            <person name="Sowers K.R."/>
        </authorList>
    </citation>
    <scope>NUCLEOTIDE SEQUENCE [LARGE SCALE GENOMIC DNA]</scope>
    <source>
        <strain>Fusaro / DSM 804</strain>
    </source>
</reference>
<comment type="function">
    <text evidence="1">May catalyze the biosynthesis of dTMP using an unknown cosubstrate.</text>
</comment>
<comment type="pathway">
    <text evidence="1">Pyrimidine metabolism; dTTP biosynthesis.</text>
</comment>
<comment type="subunit">
    <text evidence="1">Monomer.</text>
</comment>
<comment type="subcellular location">
    <subcellularLocation>
        <location evidence="1">Cytoplasm</location>
    </subcellularLocation>
</comment>
<comment type="similarity">
    <text evidence="1">Belongs to the thymidylate synthase family. Archaeal-type ThyA subfamily.</text>
</comment>
<gene>
    <name evidence="1" type="primary">thyA</name>
    <name type="ordered locus">Mbar_A0890</name>
</gene>
<organism>
    <name type="scientific">Methanosarcina barkeri (strain Fusaro / DSM 804)</name>
    <dbReference type="NCBI Taxonomy" id="269797"/>
    <lineage>
        <taxon>Archaea</taxon>
        <taxon>Methanobacteriati</taxon>
        <taxon>Methanobacteriota</taxon>
        <taxon>Stenosarchaea group</taxon>
        <taxon>Methanomicrobia</taxon>
        <taxon>Methanosarcinales</taxon>
        <taxon>Methanosarcinaceae</taxon>
        <taxon>Methanosarcina</taxon>
    </lineage>
</organism>
<name>TYSY_METBF</name>
<keyword id="KW-0963">Cytoplasm</keyword>
<keyword id="KW-0489">Methyltransferase</keyword>
<keyword id="KW-0545">Nucleotide biosynthesis</keyword>
<keyword id="KW-0808">Transferase</keyword>
<feature type="chain" id="PRO_1000000625" description="Putative thymidylate synthase">
    <location>
        <begin position="1"/>
        <end position="217"/>
    </location>
</feature>
<feature type="active site" evidence="1">
    <location>
        <position position="139"/>
    </location>
</feature>
<dbReference type="EC" id="2.1.1.-" evidence="1"/>
<dbReference type="EMBL" id="CP000099">
    <property type="protein sequence ID" value="AAZ69864.1"/>
    <property type="molecule type" value="Genomic_DNA"/>
</dbReference>
<dbReference type="SMR" id="Q46E28"/>
<dbReference type="STRING" id="269797.Mbar_A0890"/>
<dbReference type="PaxDb" id="269797-Mbar_A0890"/>
<dbReference type="KEGG" id="mba:Mbar_A0890"/>
<dbReference type="eggNOG" id="arCOG03214">
    <property type="taxonomic scope" value="Archaea"/>
</dbReference>
<dbReference type="HOGENOM" id="CLU_084975_0_0_2"/>
<dbReference type="OrthoDB" id="50118at2157"/>
<dbReference type="UniPathway" id="UPA00575"/>
<dbReference type="GO" id="GO:0005829">
    <property type="term" value="C:cytosol"/>
    <property type="evidence" value="ECO:0007669"/>
    <property type="project" value="TreeGrafter"/>
</dbReference>
<dbReference type="GO" id="GO:0004799">
    <property type="term" value="F:thymidylate synthase activity"/>
    <property type="evidence" value="ECO:0007669"/>
    <property type="project" value="UniProtKB-UniRule"/>
</dbReference>
<dbReference type="GO" id="GO:0006231">
    <property type="term" value="P:dTMP biosynthetic process"/>
    <property type="evidence" value="ECO:0007669"/>
    <property type="project" value="UniProtKB-UniRule"/>
</dbReference>
<dbReference type="GO" id="GO:0006235">
    <property type="term" value="P:dTTP biosynthetic process"/>
    <property type="evidence" value="ECO:0007669"/>
    <property type="project" value="UniProtKB-UniRule"/>
</dbReference>
<dbReference type="GO" id="GO:0032259">
    <property type="term" value="P:methylation"/>
    <property type="evidence" value="ECO:0007669"/>
    <property type="project" value="UniProtKB-KW"/>
</dbReference>
<dbReference type="CDD" id="cd00351">
    <property type="entry name" value="TS_Pyrimidine_HMase"/>
    <property type="match status" value="1"/>
</dbReference>
<dbReference type="Gene3D" id="3.30.572.10">
    <property type="entry name" value="Thymidylate synthase/dCMP hydroxymethylase domain"/>
    <property type="match status" value="1"/>
</dbReference>
<dbReference type="HAMAP" id="MF_01686">
    <property type="entry name" value="Thymidy_synth_arch"/>
    <property type="match status" value="1"/>
</dbReference>
<dbReference type="InterPro" id="IPR045097">
    <property type="entry name" value="Thymidate_synth/dCMP_Mease"/>
</dbReference>
<dbReference type="InterPro" id="IPR023451">
    <property type="entry name" value="Thymidate_synth/dCMP_Mease_dom"/>
</dbReference>
<dbReference type="InterPro" id="IPR036926">
    <property type="entry name" value="Thymidate_synth/dCMP_Mease_sf"/>
</dbReference>
<dbReference type="InterPro" id="IPR014620">
    <property type="entry name" value="Thymidylate_synthase_arc"/>
</dbReference>
<dbReference type="NCBIfam" id="TIGR03283">
    <property type="entry name" value="thy_syn_methano"/>
    <property type="match status" value="1"/>
</dbReference>
<dbReference type="PANTHER" id="PTHR11548">
    <property type="entry name" value="THYMIDYLATE SYNTHASE 1"/>
    <property type="match status" value="1"/>
</dbReference>
<dbReference type="PANTHER" id="PTHR11548:SF1">
    <property type="entry name" value="THYMIDYLATE SYNTHASE 1"/>
    <property type="match status" value="1"/>
</dbReference>
<dbReference type="Pfam" id="PF00303">
    <property type="entry name" value="Thymidylat_synt"/>
    <property type="match status" value="1"/>
</dbReference>
<dbReference type="PIRSF" id="PIRSF036752">
    <property type="entry name" value="TSase_MJ051"/>
    <property type="match status" value="1"/>
</dbReference>
<dbReference type="SUPFAM" id="SSF55831">
    <property type="entry name" value="Thymidylate synthase/dCMP hydroxymethylase"/>
    <property type="match status" value="1"/>
</dbReference>
<evidence type="ECO:0000255" key="1">
    <source>
        <dbReference type="HAMAP-Rule" id="MF_01686"/>
    </source>
</evidence>